<reference key="1">
    <citation type="journal article" date="2011" name="J. Bacteriol.">
        <title>Comparative genomics of 28 Salmonella enterica isolates: evidence for CRISPR-mediated adaptive sublineage evolution.</title>
        <authorList>
            <person name="Fricke W.F."/>
            <person name="Mammel M.K."/>
            <person name="McDermott P.F."/>
            <person name="Tartera C."/>
            <person name="White D.G."/>
            <person name="Leclerc J.E."/>
            <person name="Ravel J."/>
            <person name="Cebula T.A."/>
        </authorList>
    </citation>
    <scope>NUCLEOTIDE SEQUENCE [LARGE SCALE GENOMIC DNA]</scope>
    <source>
        <strain>SL254</strain>
    </source>
</reference>
<proteinExistence type="inferred from homology"/>
<evidence type="ECO:0000255" key="1">
    <source>
        <dbReference type="HAMAP-Rule" id="MF_00564"/>
    </source>
</evidence>
<sequence>MRPAGRSANQVRPVTLTRNYTKHAEGSVLVEFGDTKVLCTASIEEGVPRFLKGQGQGWITAEYGMLPRATHTRNAREAAKGKQGGRTMEIQRLIARALRAAVDLKTLGEFTITLDCDVIQADGGTRTASITGACVALADALNKLVANGKLKTNPMKGMVAAVSVGIVNGEAICDLEYVEDSAAETDMNVVMTEDGRIIEVQGTAEGEPFSHEELLTLLALARGGIESIVATQKAALEN</sequence>
<feature type="chain" id="PRO_1000129370" description="Ribonuclease PH">
    <location>
        <begin position="1"/>
        <end position="238"/>
    </location>
</feature>
<feature type="binding site" evidence="1">
    <location>
        <position position="86"/>
    </location>
    <ligand>
        <name>phosphate</name>
        <dbReference type="ChEBI" id="CHEBI:43474"/>
        <note>substrate</note>
    </ligand>
</feature>
<feature type="binding site" evidence="1">
    <location>
        <begin position="124"/>
        <end position="126"/>
    </location>
    <ligand>
        <name>phosphate</name>
        <dbReference type="ChEBI" id="CHEBI:43474"/>
        <note>substrate</note>
    </ligand>
</feature>
<comment type="function">
    <text evidence="1">Phosphorolytic 3'-5' exoribonuclease that plays an important role in tRNA 3'-end maturation. Removes nucleotide residues following the 3'-CCA terminus of tRNAs; can also add nucleotides to the ends of RNA molecules by using nucleoside diphosphates as substrates, but this may not be physiologically important. Probably plays a role in initiation of 16S rRNA degradation (leading to ribosome degradation) during starvation.</text>
</comment>
<comment type="catalytic activity">
    <reaction evidence="1">
        <text>tRNA(n+1) + phosphate = tRNA(n) + a ribonucleoside 5'-diphosphate</text>
        <dbReference type="Rhea" id="RHEA:10628"/>
        <dbReference type="Rhea" id="RHEA-COMP:17343"/>
        <dbReference type="Rhea" id="RHEA-COMP:17344"/>
        <dbReference type="ChEBI" id="CHEBI:43474"/>
        <dbReference type="ChEBI" id="CHEBI:57930"/>
        <dbReference type="ChEBI" id="CHEBI:173114"/>
        <dbReference type="EC" id="2.7.7.56"/>
    </reaction>
</comment>
<comment type="subunit">
    <text evidence="1">Homohexameric ring arranged as a trimer of dimers.</text>
</comment>
<comment type="similarity">
    <text evidence="1">Belongs to the RNase PH family.</text>
</comment>
<keyword id="KW-0548">Nucleotidyltransferase</keyword>
<keyword id="KW-0694">RNA-binding</keyword>
<keyword id="KW-0698">rRNA processing</keyword>
<keyword id="KW-0808">Transferase</keyword>
<keyword id="KW-0819">tRNA processing</keyword>
<keyword id="KW-0820">tRNA-binding</keyword>
<gene>
    <name evidence="1" type="primary">rph</name>
    <name type="ordered locus">SNSL254_A4014</name>
</gene>
<organism>
    <name type="scientific">Salmonella newport (strain SL254)</name>
    <dbReference type="NCBI Taxonomy" id="423368"/>
    <lineage>
        <taxon>Bacteria</taxon>
        <taxon>Pseudomonadati</taxon>
        <taxon>Pseudomonadota</taxon>
        <taxon>Gammaproteobacteria</taxon>
        <taxon>Enterobacterales</taxon>
        <taxon>Enterobacteriaceae</taxon>
        <taxon>Salmonella</taxon>
    </lineage>
</organism>
<accession>B4SXE4</accession>
<protein>
    <recommendedName>
        <fullName evidence="1">Ribonuclease PH</fullName>
        <shortName evidence="1">RNase PH</shortName>
        <ecNumber evidence="1">2.7.7.56</ecNumber>
    </recommendedName>
    <alternativeName>
        <fullName evidence="1">tRNA nucleotidyltransferase</fullName>
    </alternativeName>
</protein>
<dbReference type="EC" id="2.7.7.56" evidence="1"/>
<dbReference type="EMBL" id="CP001113">
    <property type="protein sequence ID" value="ACF61781.1"/>
    <property type="molecule type" value="Genomic_DNA"/>
</dbReference>
<dbReference type="RefSeq" id="WP_001247078.1">
    <property type="nucleotide sequence ID" value="NZ_CCMR01000004.1"/>
</dbReference>
<dbReference type="SMR" id="B4SXE4"/>
<dbReference type="KEGG" id="see:SNSL254_A4014"/>
<dbReference type="HOGENOM" id="CLU_050858_0_0_6"/>
<dbReference type="Proteomes" id="UP000008824">
    <property type="component" value="Chromosome"/>
</dbReference>
<dbReference type="GO" id="GO:0000175">
    <property type="term" value="F:3'-5'-RNA exonuclease activity"/>
    <property type="evidence" value="ECO:0007669"/>
    <property type="project" value="UniProtKB-UniRule"/>
</dbReference>
<dbReference type="GO" id="GO:0000049">
    <property type="term" value="F:tRNA binding"/>
    <property type="evidence" value="ECO:0007669"/>
    <property type="project" value="UniProtKB-UniRule"/>
</dbReference>
<dbReference type="GO" id="GO:0009022">
    <property type="term" value="F:tRNA nucleotidyltransferase activity"/>
    <property type="evidence" value="ECO:0007669"/>
    <property type="project" value="UniProtKB-UniRule"/>
</dbReference>
<dbReference type="GO" id="GO:0016075">
    <property type="term" value="P:rRNA catabolic process"/>
    <property type="evidence" value="ECO:0007669"/>
    <property type="project" value="UniProtKB-UniRule"/>
</dbReference>
<dbReference type="GO" id="GO:0006364">
    <property type="term" value="P:rRNA processing"/>
    <property type="evidence" value="ECO:0007669"/>
    <property type="project" value="UniProtKB-KW"/>
</dbReference>
<dbReference type="GO" id="GO:0008033">
    <property type="term" value="P:tRNA processing"/>
    <property type="evidence" value="ECO:0007669"/>
    <property type="project" value="UniProtKB-UniRule"/>
</dbReference>
<dbReference type="CDD" id="cd11362">
    <property type="entry name" value="RNase_PH_bact"/>
    <property type="match status" value="1"/>
</dbReference>
<dbReference type="FunFam" id="3.30.230.70:FF:000003">
    <property type="entry name" value="Ribonuclease PH"/>
    <property type="match status" value="1"/>
</dbReference>
<dbReference type="Gene3D" id="3.30.230.70">
    <property type="entry name" value="GHMP Kinase, N-terminal domain"/>
    <property type="match status" value="1"/>
</dbReference>
<dbReference type="HAMAP" id="MF_00564">
    <property type="entry name" value="RNase_PH"/>
    <property type="match status" value="1"/>
</dbReference>
<dbReference type="InterPro" id="IPR001247">
    <property type="entry name" value="ExoRNase_PH_dom1"/>
</dbReference>
<dbReference type="InterPro" id="IPR015847">
    <property type="entry name" value="ExoRNase_PH_dom2"/>
</dbReference>
<dbReference type="InterPro" id="IPR036345">
    <property type="entry name" value="ExoRNase_PH_dom2_sf"/>
</dbReference>
<dbReference type="InterPro" id="IPR027408">
    <property type="entry name" value="PNPase/RNase_PH_dom_sf"/>
</dbReference>
<dbReference type="InterPro" id="IPR020568">
    <property type="entry name" value="Ribosomal_Su5_D2-typ_SF"/>
</dbReference>
<dbReference type="InterPro" id="IPR050080">
    <property type="entry name" value="RNase_PH"/>
</dbReference>
<dbReference type="InterPro" id="IPR002381">
    <property type="entry name" value="RNase_PH_bac-type"/>
</dbReference>
<dbReference type="InterPro" id="IPR018336">
    <property type="entry name" value="RNase_PH_CS"/>
</dbReference>
<dbReference type="NCBIfam" id="TIGR01966">
    <property type="entry name" value="RNasePH"/>
    <property type="match status" value="1"/>
</dbReference>
<dbReference type="PANTHER" id="PTHR11953">
    <property type="entry name" value="EXOSOME COMPLEX COMPONENT"/>
    <property type="match status" value="1"/>
</dbReference>
<dbReference type="PANTHER" id="PTHR11953:SF0">
    <property type="entry name" value="EXOSOME COMPLEX COMPONENT RRP41"/>
    <property type="match status" value="1"/>
</dbReference>
<dbReference type="Pfam" id="PF01138">
    <property type="entry name" value="RNase_PH"/>
    <property type="match status" value="1"/>
</dbReference>
<dbReference type="Pfam" id="PF03725">
    <property type="entry name" value="RNase_PH_C"/>
    <property type="match status" value="1"/>
</dbReference>
<dbReference type="SUPFAM" id="SSF55666">
    <property type="entry name" value="Ribonuclease PH domain 2-like"/>
    <property type="match status" value="1"/>
</dbReference>
<dbReference type="SUPFAM" id="SSF54211">
    <property type="entry name" value="Ribosomal protein S5 domain 2-like"/>
    <property type="match status" value="1"/>
</dbReference>
<dbReference type="PROSITE" id="PS01277">
    <property type="entry name" value="RIBONUCLEASE_PH"/>
    <property type="match status" value="1"/>
</dbReference>
<name>RNPH_SALNS</name>